<evidence type="ECO:0000250" key="1"/>
<evidence type="ECO:0000305" key="2"/>
<accession>P74529</accession>
<feature type="chain" id="PRO_0000179279" description="UDP-N-acetylenolpyruvoylglucosamine reductase">
    <location>
        <begin position="1"/>
        <end position="317"/>
    </location>
</feature>
<feature type="domain" description="FAD-binding PCMH-type">
    <location>
        <begin position="39"/>
        <end position="208"/>
    </location>
</feature>
<feature type="active site" evidence="1">
    <location>
        <position position="185"/>
    </location>
</feature>
<feature type="active site" description="Proton donor" evidence="1">
    <location>
        <position position="238"/>
    </location>
</feature>
<feature type="active site" evidence="1">
    <location>
        <position position="308"/>
    </location>
</feature>
<comment type="function">
    <text evidence="1">Cell wall formation.</text>
</comment>
<comment type="catalytic activity">
    <reaction>
        <text>UDP-N-acetyl-alpha-D-muramate + NADP(+) = UDP-N-acetyl-3-O-(1-carboxyvinyl)-alpha-D-glucosamine + NADPH + H(+)</text>
        <dbReference type="Rhea" id="RHEA:12248"/>
        <dbReference type="ChEBI" id="CHEBI:15378"/>
        <dbReference type="ChEBI" id="CHEBI:57783"/>
        <dbReference type="ChEBI" id="CHEBI:58349"/>
        <dbReference type="ChEBI" id="CHEBI:68483"/>
        <dbReference type="ChEBI" id="CHEBI:70757"/>
        <dbReference type="EC" id="1.3.1.98"/>
    </reaction>
</comment>
<comment type="cofactor">
    <cofactor evidence="1">
        <name>FAD</name>
        <dbReference type="ChEBI" id="CHEBI:57692"/>
    </cofactor>
</comment>
<comment type="pathway">
    <text>Cell wall biogenesis; peptidoglycan biosynthesis.</text>
</comment>
<comment type="subcellular location">
    <subcellularLocation>
        <location evidence="1">Cytoplasm</location>
    </subcellularLocation>
</comment>
<comment type="similarity">
    <text evidence="2">Belongs to the MurB family.</text>
</comment>
<organism>
    <name type="scientific">Synechocystis sp. (strain ATCC 27184 / PCC 6803 / Kazusa)</name>
    <dbReference type="NCBI Taxonomy" id="1111708"/>
    <lineage>
        <taxon>Bacteria</taxon>
        <taxon>Bacillati</taxon>
        <taxon>Cyanobacteriota</taxon>
        <taxon>Cyanophyceae</taxon>
        <taxon>Synechococcales</taxon>
        <taxon>Merismopediaceae</taxon>
        <taxon>Synechocystis</taxon>
    </lineage>
</organism>
<sequence length="317" mass="34586">MIISPATRPTPMETPAIALAGTGTIIQPETSLAEFTTYRVGGKAEWYAAPRCLEDLVAVLDWFQGQDLPLTFLGAGSNLLISDQGLAGLVLSTRYLRQSKFDEEQGLITVAAGEPIAKVGWQAAKRGWQGLEWAVGIPGTVGGAVVMNAGAHNQCTAETLVEATVMRPDGGLEVLTNEQLGFSYRTSNLQKHLGDRLVVDATFKLTPGFTREEIMGCTTRNLHQRKSTQPYDKPNCGSVFRNPTPLYSARLIEELGLKGYRIGGAEVSQRHANFIVNIDNAKAQDVFNLIFHVQGEVEKHYGILLEPEVKMLGEFAR</sequence>
<proteinExistence type="inferred from homology"/>
<dbReference type="EC" id="1.3.1.98"/>
<dbReference type="EMBL" id="BA000022">
    <property type="protein sequence ID" value="BAA18635.1"/>
    <property type="molecule type" value="Genomic_DNA"/>
</dbReference>
<dbReference type="PIR" id="S76723">
    <property type="entry name" value="S76723"/>
</dbReference>
<dbReference type="SMR" id="P74529"/>
<dbReference type="FunCoup" id="P74529">
    <property type="interactions" value="317"/>
</dbReference>
<dbReference type="STRING" id="1148.gene:10500400"/>
<dbReference type="PaxDb" id="1148-1653724"/>
<dbReference type="EnsemblBacteria" id="BAA18635">
    <property type="protein sequence ID" value="BAA18635"/>
    <property type="gene ID" value="BAA18635"/>
</dbReference>
<dbReference type="KEGG" id="syn:slr1424"/>
<dbReference type="eggNOG" id="COG0812">
    <property type="taxonomic scope" value="Bacteria"/>
</dbReference>
<dbReference type="InParanoid" id="P74529"/>
<dbReference type="PhylomeDB" id="P74529"/>
<dbReference type="UniPathway" id="UPA00219"/>
<dbReference type="Proteomes" id="UP000001425">
    <property type="component" value="Chromosome"/>
</dbReference>
<dbReference type="GO" id="GO:0005829">
    <property type="term" value="C:cytosol"/>
    <property type="evidence" value="ECO:0000318"/>
    <property type="project" value="GO_Central"/>
</dbReference>
<dbReference type="GO" id="GO:0071949">
    <property type="term" value="F:FAD binding"/>
    <property type="evidence" value="ECO:0007669"/>
    <property type="project" value="InterPro"/>
</dbReference>
<dbReference type="GO" id="GO:0050660">
    <property type="term" value="F:flavin adenine dinucleotide binding"/>
    <property type="evidence" value="ECO:0000318"/>
    <property type="project" value="GO_Central"/>
</dbReference>
<dbReference type="GO" id="GO:0008762">
    <property type="term" value="F:UDP-N-acetylmuramate dehydrogenase activity"/>
    <property type="evidence" value="ECO:0000318"/>
    <property type="project" value="GO_Central"/>
</dbReference>
<dbReference type="GO" id="GO:0051301">
    <property type="term" value="P:cell division"/>
    <property type="evidence" value="ECO:0007669"/>
    <property type="project" value="UniProtKB-KW"/>
</dbReference>
<dbReference type="GO" id="GO:0071555">
    <property type="term" value="P:cell wall organization"/>
    <property type="evidence" value="ECO:0000318"/>
    <property type="project" value="GO_Central"/>
</dbReference>
<dbReference type="GO" id="GO:0009252">
    <property type="term" value="P:peptidoglycan biosynthetic process"/>
    <property type="evidence" value="ECO:0007669"/>
    <property type="project" value="UniProtKB-UniRule"/>
</dbReference>
<dbReference type="GO" id="GO:0008360">
    <property type="term" value="P:regulation of cell shape"/>
    <property type="evidence" value="ECO:0007669"/>
    <property type="project" value="UniProtKB-KW"/>
</dbReference>
<dbReference type="Gene3D" id="3.30.465.10">
    <property type="match status" value="1"/>
</dbReference>
<dbReference type="Gene3D" id="3.90.78.10">
    <property type="entry name" value="UDP-N-acetylenolpyruvoylglucosamine reductase, C-terminal domain"/>
    <property type="match status" value="1"/>
</dbReference>
<dbReference type="Gene3D" id="3.30.43.10">
    <property type="entry name" value="Uridine Diphospho-n-acetylenolpyruvylglucosamine Reductase, domain 2"/>
    <property type="match status" value="1"/>
</dbReference>
<dbReference type="HAMAP" id="MF_00037">
    <property type="entry name" value="MurB"/>
    <property type="match status" value="1"/>
</dbReference>
<dbReference type="InterPro" id="IPR016166">
    <property type="entry name" value="FAD-bd_PCMH"/>
</dbReference>
<dbReference type="InterPro" id="IPR036318">
    <property type="entry name" value="FAD-bd_PCMH-like_sf"/>
</dbReference>
<dbReference type="InterPro" id="IPR016167">
    <property type="entry name" value="FAD-bd_PCMH_sub1"/>
</dbReference>
<dbReference type="InterPro" id="IPR016169">
    <property type="entry name" value="FAD-bd_PCMH_sub2"/>
</dbReference>
<dbReference type="InterPro" id="IPR003170">
    <property type="entry name" value="MurB"/>
</dbReference>
<dbReference type="InterPro" id="IPR011601">
    <property type="entry name" value="MurB_C"/>
</dbReference>
<dbReference type="InterPro" id="IPR036635">
    <property type="entry name" value="MurB_C_sf"/>
</dbReference>
<dbReference type="InterPro" id="IPR006094">
    <property type="entry name" value="Oxid_FAD_bind_N"/>
</dbReference>
<dbReference type="NCBIfam" id="TIGR00179">
    <property type="entry name" value="murB"/>
    <property type="match status" value="1"/>
</dbReference>
<dbReference type="NCBIfam" id="NF010480">
    <property type="entry name" value="PRK13905.1"/>
    <property type="match status" value="1"/>
</dbReference>
<dbReference type="PANTHER" id="PTHR21071">
    <property type="entry name" value="UDP-N-ACETYLENOLPYRUVOYLGLUCOSAMINE REDUCTASE"/>
    <property type="match status" value="1"/>
</dbReference>
<dbReference type="PANTHER" id="PTHR21071:SF4">
    <property type="entry name" value="UDP-N-ACETYLENOLPYRUVOYLGLUCOSAMINE REDUCTASE"/>
    <property type="match status" value="1"/>
</dbReference>
<dbReference type="Pfam" id="PF01565">
    <property type="entry name" value="FAD_binding_4"/>
    <property type="match status" value="1"/>
</dbReference>
<dbReference type="Pfam" id="PF02873">
    <property type="entry name" value="MurB_C"/>
    <property type="match status" value="1"/>
</dbReference>
<dbReference type="SUPFAM" id="SSF56176">
    <property type="entry name" value="FAD-binding/transporter-associated domain-like"/>
    <property type="match status" value="1"/>
</dbReference>
<dbReference type="SUPFAM" id="SSF56194">
    <property type="entry name" value="Uridine diphospho-N-Acetylenolpyruvylglucosamine reductase, MurB, C-terminal domain"/>
    <property type="match status" value="1"/>
</dbReference>
<dbReference type="PROSITE" id="PS51387">
    <property type="entry name" value="FAD_PCMH"/>
    <property type="match status" value="1"/>
</dbReference>
<reference key="1">
    <citation type="journal article" date="1996" name="DNA Res.">
        <title>Sequence analysis of the genome of the unicellular cyanobacterium Synechocystis sp. strain PCC6803. II. Sequence determination of the entire genome and assignment of potential protein-coding regions.</title>
        <authorList>
            <person name="Kaneko T."/>
            <person name="Sato S."/>
            <person name="Kotani H."/>
            <person name="Tanaka A."/>
            <person name="Asamizu E."/>
            <person name="Nakamura Y."/>
            <person name="Miyajima N."/>
            <person name="Hirosawa M."/>
            <person name="Sugiura M."/>
            <person name="Sasamoto S."/>
            <person name="Kimura T."/>
            <person name="Hosouchi T."/>
            <person name="Matsuno A."/>
            <person name="Muraki A."/>
            <person name="Nakazaki N."/>
            <person name="Naruo K."/>
            <person name="Okumura S."/>
            <person name="Shimpo S."/>
            <person name="Takeuchi C."/>
            <person name="Wada T."/>
            <person name="Watanabe A."/>
            <person name="Yamada M."/>
            <person name="Yasuda M."/>
            <person name="Tabata S."/>
        </authorList>
    </citation>
    <scope>NUCLEOTIDE SEQUENCE [LARGE SCALE GENOMIC DNA]</scope>
    <source>
        <strain>ATCC 27184 / PCC 6803 / Kazusa</strain>
    </source>
</reference>
<protein>
    <recommendedName>
        <fullName>UDP-N-acetylenolpyruvoylglucosamine reductase</fullName>
        <ecNumber>1.3.1.98</ecNumber>
    </recommendedName>
    <alternativeName>
        <fullName>UDP-N-acetylmuramate dehydrogenase</fullName>
    </alternativeName>
</protein>
<name>MURB_SYNY3</name>
<keyword id="KW-0131">Cell cycle</keyword>
<keyword id="KW-0132">Cell division</keyword>
<keyword id="KW-0133">Cell shape</keyword>
<keyword id="KW-0961">Cell wall biogenesis/degradation</keyword>
<keyword id="KW-0963">Cytoplasm</keyword>
<keyword id="KW-0274">FAD</keyword>
<keyword id="KW-0285">Flavoprotein</keyword>
<keyword id="KW-0521">NADP</keyword>
<keyword id="KW-0560">Oxidoreductase</keyword>
<keyword id="KW-0573">Peptidoglycan synthesis</keyword>
<keyword id="KW-1185">Reference proteome</keyword>
<gene>
    <name type="primary">murB</name>
    <name type="ordered locus">slr1424</name>
</gene>